<accession>B0K5P6</accession>
<dbReference type="EMBL" id="CP000923">
    <property type="protein sequence ID" value="ABY92172.1"/>
    <property type="molecule type" value="Genomic_DNA"/>
</dbReference>
<dbReference type="RefSeq" id="WP_003868563.1">
    <property type="nucleotide sequence ID" value="NC_010320.1"/>
</dbReference>
<dbReference type="SMR" id="B0K5P6"/>
<dbReference type="KEGG" id="tex:Teth514_0870"/>
<dbReference type="HOGENOM" id="CLU_036235_2_1_9"/>
<dbReference type="Proteomes" id="UP000002155">
    <property type="component" value="Chromosome"/>
</dbReference>
<dbReference type="GO" id="GO:0015934">
    <property type="term" value="C:large ribosomal subunit"/>
    <property type="evidence" value="ECO:0007669"/>
    <property type="project" value="InterPro"/>
</dbReference>
<dbReference type="GO" id="GO:0019843">
    <property type="term" value="F:rRNA binding"/>
    <property type="evidence" value="ECO:0007669"/>
    <property type="project" value="UniProtKB-UniRule"/>
</dbReference>
<dbReference type="GO" id="GO:0003735">
    <property type="term" value="F:structural constituent of ribosome"/>
    <property type="evidence" value="ECO:0007669"/>
    <property type="project" value="InterPro"/>
</dbReference>
<dbReference type="GO" id="GO:0016740">
    <property type="term" value="F:transferase activity"/>
    <property type="evidence" value="ECO:0007669"/>
    <property type="project" value="InterPro"/>
</dbReference>
<dbReference type="GO" id="GO:0002181">
    <property type="term" value="P:cytoplasmic translation"/>
    <property type="evidence" value="ECO:0007669"/>
    <property type="project" value="TreeGrafter"/>
</dbReference>
<dbReference type="FunFam" id="2.30.30.30:FF:000001">
    <property type="entry name" value="50S ribosomal protein L2"/>
    <property type="match status" value="1"/>
</dbReference>
<dbReference type="FunFam" id="2.40.50.140:FF:000003">
    <property type="entry name" value="50S ribosomal protein L2"/>
    <property type="match status" value="1"/>
</dbReference>
<dbReference type="FunFam" id="4.10.950.10:FF:000001">
    <property type="entry name" value="50S ribosomal protein L2"/>
    <property type="match status" value="1"/>
</dbReference>
<dbReference type="Gene3D" id="2.30.30.30">
    <property type="match status" value="1"/>
</dbReference>
<dbReference type="Gene3D" id="2.40.50.140">
    <property type="entry name" value="Nucleic acid-binding proteins"/>
    <property type="match status" value="1"/>
</dbReference>
<dbReference type="Gene3D" id="4.10.950.10">
    <property type="entry name" value="Ribosomal protein L2, domain 3"/>
    <property type="match status" value="1"/>
</dbReference>
<dbReference type="HAMAP" id="MF_01320_B">
    <property type="entry name" value="Ribosomal_uL2_B"/>
    <property type="match status" value="1"/>
</dbReference>
<dbReference type="InterPro" id="IPR012340">
    <property type="entry name" value="NA-bd_OB-fold"/>
</dbReference>
<dbReference type="InterPro" id="IPR014722">
    <property type="entry name" value="Rib_uL2_dom2"/>
</dbReference>
<dbReference type="InterPro" id="IPR002171">
    <property type="entry name" value="Ribosomal_uL2"/>
</dbReference>
<dbReference type="InterPro" id="IPR005880">
    <property type="entry name" value="Ribosomal_uL2_bac/org-type"/>
</dbReference>
<dbReference type="InterPro" id="IPR022669">
    <property type="entry name" value="Ribosomal_uL2_C"/>
</dbReference>
<dbReference type="InterPro" id="IPR022671">
    <property type="entry name" value="Ribosomal_uL2_CS"/>
</dbReference>
<dbReference type="InterPro" id="IPR014726">
    <property type="entry name" value="Ribosomal_uL2_dom3"/>
</dbReference>
<dbReference type="InterPro" id="IPR022666">
    <property type="entry name" value="Ribosomal_uL2_RNA-bd_dom"/>
</dbReference>
<dbReference type="InterPro" id="IPR008991">
    <property type="entry name" value="Translation_prot_SH3-like_sf"/>
</dbReference>
<dbReference type="NCBIfam" id="TIGR01171">
    <property type="entry name" value="rplB_bact"/>
    <property type="match status" value="1"/>
</dbReference>
<dbReference type="PANTHER" id="PTHR13691:SF5">
    <property type="entry name" value="LARGE RIBOSOMAL SUBUNIT PROTEIN UL2M"/>
    <property type="match status" value="1"/>
</dbReference>
<dbReference type="PANTHER" id="PTHR13691">
    <property type="entry name" value="RIBOSOMAL PROTEIN L2"/>
    <property type="match status" value="1"/>
</dbReference>
<dbReference type="Pfam" id="PF00181">
    <property type="entry name" value="Ribosomal_L2"/>
    <property type="match status" value="1"/>
</dbReference>
<dbReference type="Pfam" id="PF03947">
    <property type="entry name" value="Ribosomal_L2_C"/>
    <property type="match status" value="1"/>
</dbReference>
<dbReference type="PIRSF" id="PIRSF002158">
    <property type="entry name" value="Ribosomal_L2"/>
    <property type="match status" value="1"/>
</dbReference>
<dbReference type="SMART" id="SM01383">
    <property type="entry name" value="Ribosomal_L2"/>
    <property type="match status" value="1"/>
</dbReference>
<dbReference type="SMART" id="SM01382">
    <property type="entry name" value="Ribosomal_L2_C"/>
    <property type="match status" value="1"/>
</dbReference>
<dbReference type="SUPFAM" id="SSF50249">
    <property type="entry name" value="Nucleic acid-binding proteins"/>
    <property type="match status" value="1"/>
</dbReference>
<dbReference type="SUPFAM" id="SSF50104">
    <property type="entry name" value="Translation proteins SH3-like domain"/>
    <property type="match status" value="1"/>
</dbReference>
<dbReference type="PROSITE" id="PS00467">
    <property type="entry name" value="RIBOSOMAL_L2"/>
    <property type="match status" value="1"/>
</dbReference>
<comment type="function">
    <text evidence="1">One of the primary rRNA binding proteins. Required for association of the 30S and 50S subunits to form the 70S ribosome, for tRNA binding and peptide bond formation. It has been suggested to have peptidyltransferase activity; this is somewhat controversial. Makes several contacts with the 16S rRNA in the 70S ribosome.</text>
</comment>
<comment type="subunit">
    <text evidence="1">Part of the 50S ribosomal subunit. Forms a bridge to the 30S subunit in the 70S ribosome.</text>
</comment>
<comment type="similarity">
    <text evidence="1">Belongs to the universal ribosomal protein uL2 family.</text>
</comment>
<keyword id="KW-0687">Ribonucleoprotein</keyword>
<keyword id="KW-0689">Ribosomal protein</keyword>
<keyword id="KW-0694">RNA-binding</keyword>
<keyword id="KW-0699">rRNA-binding</keyword>
<organism>
    <name type="scientific">Thermoanaerobacter sp. (strain X514)</name>
    <dbReference type="NCBI Taxonomy" id="399726"/>
    <lineage>
        <taxon>Bacteria</taxon>
        <taxon>Bacillati</taxon>
        <taxon>Bacillota</taxon>
        <taxon>Clostridia</taxon>
        <taxon>Thermoanaerobacterales</taxon>
        <taxon>Thermoanaerobacteraceae</taxon>
        <taxon>Thermoanaerobacter</taxon>
    </lineage>
</organism>
<gene>
    <name evidence="1" type="primary">rplB</name>
    <name type="ordered locus">Teth514_0870</name>
</gene>
<evidence type="ECO:0000255" key="1">
    <source>
        <dbReference type="HAMAP-Rule" id="MF_01320"/>
    </source>
</evidence>
<evidence type="ECO:0000256" key="2">
    <source>
        <dbReference type="SAM" id="MobiDB-lite"/>
    </source>
</evidence>
<evidence type="ECO:0000305" key="3"/>
<reference key="1">
    <citation type="submission" date="2008-01" db="EMBL/GenBank/DDBJ databases">
        <title>Complete sequence of Thermoanaerobacter sp. X514.</title>
        <authorList>
            <consortium name="US DOE Joint Genome Institute"/>
            <person name="Copeland A."/>
            <person name="Lucas S."/>
            <person name="Lapidus A."/>
            <person name="Barry K."/>
            <person name="Glavina del Rio T."/>
            <person name="Dalin E."/>
            <person name="Tice H."/>
            <person name="Pitluck S."/>
            <person name="Bruce D."/>
            <person name="Goodwin L."/>
            <person name="Saunders E."/>
            <person name="Brettin T."/>
            <person name="Detter J.C."/>
            <person name="Han C."/>
            <person name="Schmutz J."/>
            <person name="Larimer F."/>
            <person name="Land M."/>
            <person name="Hauser L."/>
            <person name="Kyrpides N."/>
            <person name="Kim E."/>
            <person name="Hemme C."/>
            <person name="Fields M.W."/>
            <person name="He Z."/>
            <person name="Zhou J."/>
            <person name="Richardson P."/>
        </authorList>
    </citation>
    <scope>NUCLEOTIDE SEQUENCE [LARGE SCALE GENOMIC DNA]</scope>
    <source>
        <strain>X514</strain>
    </source>
</reference>
<feature type="chain" id="PRO_1000141632" description="Large ribosomal subunit protein uL2">
    <location>
        <begin position="1"/>
        <end position="275"/>
    </location>
</feature>
<feature type="region of interest" description="Disordered" evidence="2">
    <location>
        <begin position="224"/>
        <end position="275"/>
    </location>
</feature>
<feature type="compositionally biased region" description="Basic and acidic residues" evidence="2">
    <location>
        <begin position="264"/>
        <end position="275"/>
    </location>
</feature>
<sequence>MGIKSFKPTSPGRRQMTVLTFEEVTKDKPEKSLVVTLTKTGGRNVYGRITVRHRGGGHKRKYRIIDFKRDKDGIPGKVAAIEYDPNRTAYIALIHYLDGEKRYIIAPYGLKVGDIIESGENVDIKVGNALPLRNIPVGTIIHNIELIPGKGGQLVRAAGTAAQLMAKEGDYVQVRMPSGEIRLIKADCRATIGQVSNLDHENVKIGKAGRSRWLGIRPTVRGSAMNPVDHPHGGGEGKAPIGHPGPLTPWGKPALGYKTRKKGKASDKFIIRRRK</sequence>
<name>RL2_THEPX</name>
<proteinExistence type="inferred from homology"/>
<protein>
    <recommendedName>
        <fullName evidence="1">Large ribosomal subunit protein uL2</fullName>
    </recommendedName>
    <alternativeName>
        <fullName evidence="3">50S ribosomal protein L2</fullName>
    </alternativeName>
</protein>